<dbReference type="EMBL" id="DQ387062">
    <property type="protein sequence ID" value="ABD52001.1"/>
    <property type="molecule type" value="mRNA"/>
</dbReference>
<dbReference type="RefSeq" id="NP_001102413.1">
    <property type="nucleotide sequence ID" value="NM_001108943.3"/>
</dbReference>
<dbReference type="SMR" id="A3QPB9"/>
<dbReference type="STRING" id="10116.ENSRNOP00000023348"/>
<dbReference type="GlyCosmos" id="A3QPB9">
    <property type="glycosylation" value="1 site, No reported glycans"/>
</dbReference>
<dbReference type="GlyGen" id="A3QPB9">
    <property type="glycosylation" value="1 site"/>
</dbReference>
<dbReference type="PhosphoSitePlus" id="A3QPB9"/>
<dbReference type="PaxDb" id="10116-ENSRNOP00000023348"/>
<dbReference type="Ensembl" id="ENSRNOT00000110753.1">
    <property type="protein sequence ID" value="ENSRNOP00000097142.1"/>
    <property type="gene ID" value="ENSRNOG00000017376.5"/>
</dbReference>
<dbReference type="GeneID" id="365769"/>
<dbReference type="KEGG" id="rno:365769"/>
<dbReference type="UCSC" id="RGD:1307384">
    <property type="organism name" value="rat"/>
</dbReference>
<dbReference type="AGR" id="RGD:1307384"/>
<dbReference type="CTD" id="59067"/>
<dbReference type="RGD" id="1307384">
    <property type="gene designation" value="Il21"/>
</dbReference>
<dbReference type="eggNOG" id="ENOG502SES1">
    <property type="taxonomic scope" value="Eukaryota"/>
</dbReference>
<dbReference type="GeneTree" id="ENSGT00390000010494"/>
<dbReference type="HOGENOM" id="CLU_127182_1_0_1"/>
<dbReference type="InParanoid" id="A3QPB9"/>
<dbReference type="OrthoDB" id="53413at9989"/>
<dbReference type="PhylomeDB" id="A3QPB9"/>
<dbReference type="TreeFam" id="TF336380"/>
<dbReference type="Reactome" id="R-RNO-9020958">
    <property type="pathway name" value="Interleukin-21 signaling"/>
</dbReference>
<dbReference type="PRO" id="PR:A3QPB9"/>
<dbReference type="Proteomes" id="UP000002494">
    <property type="component" value="Chromosome 2"/>
</dbReference>
<dbReference type="Bgee" id="ENSRNOG00000017376">
    <property type="expression patterns" value="Expressed in cerebellum and 5 other cell types or tissues"/>
</dbReference>
<dbReference type="GO" id="GO:0005615">
    <property type="term" value="C:extracellular space"/>
    <property type="evidence" value="ECO:0007669"/>
    <property type="project" value="UniProtKB-KW"/>
</dbReference>
<dbReference type="GO" id="GO:0005125">
    <property type="term" value="F:cytokine activity"/>
    <property type="evidence" value="ECO:0007669"/>
    <property type="project" value="UniProtKB-KW"/>
</dbReference>
<dbReference type="GO" id="GO:0005126">
    <property type="term" value="F:cytokine receptor binding"/>
    <property type="evidence" value="ECO:0000266"/>
    <property type="project" value="RGD"/>
</dbReference>
<dbReference type="GO" id="GO:0005134">
    <property type="term" value="F:interleukin-2 receptor binding"/>
    <property type="evidence" value="ECO:0000266"/>
    <property type="project" value="RGD"/>
</dbReference>
<dbReference type="GO" id="GO:0048469">
    <property type="term" value="P:cell maturation"/>
    <property type="evidence" value="ECO:0000266"/>
    <property type="project" value="RGD"/>
</dbReference>
<dbReference type="GO" id="GO:0098586">
    <property type="term" value="P:cellular response to virus"/>
    <property type="evidence" value="ECO:0000250"/>
    <property type="project" value="UniProtKB"/>
</dbReference>
<dbReference type="GO" id="GO:0002314">
    <property type="term" value="P:germinal center B cell differentiation"/>
    <property type="evidence" value="ECO:0000250"/>
    <property type="project" value="UniProtKB"/>
</dbReference>
<dbReference type="GO" id="GO:0001779">
    <property type="term" value="P:natural killer cell differentiation"/>
    <property type="evidence" value="ECO:0000266"/>
    <property type="project" value="RGD"/>
</dbReference>
<dbReference type="GO" id="GO:0042267">
    <property type="term" value="P:natural killer cell mediated cytotoxicity"/>
    <property type="evidence" value="ECO:0000266"/>
    <property type="project" value="RGD"/>
</dbReference>
<dbReference type="GO" id="GO:0030890">
    <property type="term" value="P:positive regulation of B cell proliferation"/>
    <property type="evidence" value="ECO:0000266"/>
    <property type="project" value="RGD"/>
</dbReference>
<dbReference type="GO" id="GO:0008284">
    <property type="term" value="P:positive regulation of cell population proliferation"/>
    <property type="evidence" value="ECO:0000266"/>
    <property type="project" value="RGD"/>
</dbReference>
<dbReference type="GO" id="GO:0001819">
    <property type="term" value="P:positive regulation of cytokine production"/>
    <property type="evidence" value="ECO:0000266"/>
    <property type="project" value="RGD"/>
</dbReference>
<dbReference type="GO" id="GO:0002639">
    <property type="term" value="P:positive regulation of immunoglobulin production"/>
    <property type="evidence" value="ECO:0000250"/>
    <property type="project" value="UniProtKB"/>
</dbReference>
<dbReference type="GO" id="GO:0032733">
    <property type="term" value="P:positive regulation of interleukin-10 production"/>
    <property type="evidence" value="ECO:0000266"/>
    <property type="project" value="RGD"/>
</dbReference>
<dbReference type="GO" id="GO:0032740">
    <property type="term" value="P:positive regulation of interleukin-17 production"/>
    <property type="evidence" value="ECO:0000266"/>
    <property type="project" value="RGD"/>
</dbReference>
<dbReference type="GO" id="GO:0002729">
    <property type="term" value="P:positive regulation of natural killer cell cytokine production"/>
    <property type="evidence" value="ECO:0000266"/>
    <property type="project" value="RGD"/>
</dbReference>
<dbReference type="GO" id="GO:0032825">
    <property type="term" value="P:positive regulation of natural killer cell differentiation"/>
    <property type="evidence" value="ECO:0000266"/>
    <property type="project" value="RGD"/>
</dbReference>
<dbReference type="GO" id="GO:0045954">
    <property type="term" value="P:positive regulation of natural killer cell mediated cytotoxicity"/>
    <property type="evidence" value="ECO:0000266"/>
    <property type="project" value="RGD"/>
</dbReference>
<dbReference type="GO" id="GO:0042102">
    <property type="term" value="P:positive regulation of T cell proliferation"/>
    <property type="evidence" value="ECO:0000266"/>
    <property type="project" value="RGD"/>
</dbReference>
<dbReference type="GO" id="GO:0032729">
    <property type="term" value="P:positive regulation of type II interferon production"/>
    <property type="evidence" value="ECO:0000266"/>
    <property type="project" value="RGD"/>
</dbReference>
<dbReference type="GO" id="GO:1990784">
    <property type="term" value="P:response to dsDNA"/>
    <property type="evidence" value="ECO:0000270"/>
    <property type="project" value="RGD"/>
</dbReference>
<dbReference type="GO" id="GO:0061470">
    <property type="term" value="P:T follicular helper cell differentiation"/>
    <property type="evidence" value="ECO:0000250"/>
    <property type="project" value="UniProtKB"/>
</dbReference>
<dbReference type="Gene3D" id="1.20.1250.70">
    <property type="entry name" value="Interleukin-15/Interleukin-21"/>
    <property type="match status" value="1"/>
</dbReference>
<dbReference type="InterPro" id="IPR009079">
    <property type="entry name" value="4_helix_cytokine-like_core"/>
</dbReference>
<dbReference type="InterPro" id="IPR003443">
    <property type="entry name" value="IL-15/IL-21_fam"/>
</dbReference>
<dbReference type="PANTHER" id="PTHR14356">
    <property type="entry name" value="INTERLEUKIN-15-RELATED"/>
    <property type="match status" value="1"/>
</dbReference>
<dbReference type="PANTHER" id="PTHR14356:SF2">
    <property type="entry name" value="INTERLEUKIN-21"/>
    <property type="match status" value="1"/>
</dbReference>
<dbReference type="SUPFAM" id="SSF47266">
    <property type="entry name" value="4-helical cytokines"/>
    <property type="match status" value="1"/>
</dbReference>
<name>IL21_RAT</name>
<sequence length="146" mass="17065">MERTLVCLILIFLGTVAHKSSPQRPDHLLIRLRHLMDIVEQLKIYENDLDPELLTAPQDVKGQCEHEAFACFQKAKLKPSNTGNNKTFINDLLAQLRRRLPAKRTGNKQRHMAKCPSCDLYEKKTPKEFLERLKWLLQKMIHQHLS</sequence>
<protein>
    <recommendedName>
        <fullName>Interleukin-21</fullName>
        <shortName>IL-21</shortName>
    </recommendedName>
</protein>
<comment type="function">
    <text evidence="2 3">Cytokine with immunoregulatory activity. May promote the transition between innate and adaptive immunity. Induces the production of IgG(1) and IgG(3) in B-cells. Implicated in the generation and maintenance of T follicular helper (Tfh) cells and the formation of germinal-centers. Together with IL6, control the early generation of Tfh cells and are critical for an effective antibody response to acute viral infection (By similarity). May play a role in proliferation and maturation of natural killer (NK) cells in synergy with IL15. May regulate proliferation of mature B- and T-cells in response to activating stimuli. In synergy with IL15 and IL18 stimulates interferon gamma production in T-cells and NK cells (By similarity). During T-cell mediated immune response may inhibit dendritic cells (DC) activation and maturation (By similarity).</text>
</comment>
<comment type="subcellular location">
    <subcellularLocation>
        <location evidence="3">Secreted</location>
    </subcellularLocation>
</comment>
<comment type="similarity">
    <text evidence="5">Belongs to the IL-15/IL-21 family.</text>
</comment>
<proteinExistence type="evidence at transcript level"/>
<evidence type="ECO:0000250" key="1">
    <source>
        <dbReference type="UniProtKB" id="Q76LU5"/>
    </source>
</evidence>
<evidence type="ECO:0000250" key="2">
    <source>
        <dbReference type="UniProtKB" id="Q9ES17"/>
    </source>
</evidence>
<evidence type="ECO:0000250" key="3">
    <source>
        <dbReference type="UniProtKB" id="Q9HBE4"/>
    </source>
</evidence>
<evidence type="ECO:0000255" key="4"/>
<evidence type="ECO:0000305" key="5"/>
<organism>
    <name type="scientific">Rattus norvegicus</name>
    <name type="common">Rat</name>
    <dbReference type="NCBI Taxonomy" id="10116"/>
    <lineage>
        <taxon>Eukaryota</taxon>
        <taxon>Metazoa</taxon>
        <taxon>Chordata</taxon>
        <taxon>Craniata</taxon>
        <taxon>Vertebrata</taxon>
        <taxon>Euteleostomi</taxon>
        <taxon>Mammalia</taxon>
        <taxon>Eutheria</taxon>
        <taxon>Euarchontoglires</taxon>
        <taxon>Glires</taxon>
        <taxon>Rodentia</taxon>
        <taxon>Myomorpha</taxon>
        <taxon>Muroidea</taxon>
        <taxon>Muridae</taxon>
        <taxon>Murinae</taxon>
        <taxon>Rattus</taxon>
    </lineage>
</organism>
<gene>
    <name type="primary">Il21</name>
</gene>
<reference key="1">
    <citation type="submission" date="2006-02" db="EMBL/GenBank/DDBJ databases">
        <authorList>
            <person name="Wu P.W."/>
        </authorList>
    </citation>
    <scope>NUCLEOTIDE SEQUENCE [MRNA]</scope>
    <source>
        <strain>Sprague-Dawley</strain>
    </source>
</reference>
<feature type="signal peptide" evidence="1">
    <location>
        <begin position="1"/>
        <end position="17"/>
    </location>
</feature>
<feature type="chain" id="PRO_0000313746" description="Interleukin-21">
    <location>
        <begin position="18"/>
        <end position="146"/>
    </location>
</feature>
<feature type="glycosylation site" description="N-linked (GlcNAc...) asparagine" evidence="4">
    <location>
        <position position="85"/>
    </location>
</feature>
<feature type="disulfide bond" evidence="3">
    <location>
        <begin position="64"/>
        <end position="115"/>
    </location>
</feature>
<feature type="disulfide bond" evidence="3">
    <location>
        <begin position="71"/>
        <end position="118"/>
    </location>
</feature>
<keyword id="KW-0202">Cytokine</keyword>
<keyword id="KW-1015">Disulfide bond</keyword>
<keyword id="KW-0325">Glycoprotein</keyword>
<keyword id="KW-1185">Reference proteome</keyword>
<keyword id="KW-0964">Secreted</keyword>
<keyword id="KW-0732">Signal</keyword>
<accession>A3QPB9</accession>